<keyword id="KW-0560">Oxidoreductase</keyword>
<feature type="chain" id="PRO_1000145442" description="Peptide methionine sulfoxide reductase MsrA">
    <location>
        <begin position="1"/>
        <end position="165"/>
    </location>
</feature>
<feature type="active site" evidence="1">
    <location>
        <position position="11"/>
    </location>
</feature>
<comment type="function">
    <text evidence="1">Has an important function as a repair enzyme for proteins that have been inactivated by oxidation. Catalyzes the reversible oxidation-reduction of methionine sulfoxide in proteins to methionine.</text>
</comment>
<comment type="catalytic activity">
    <reaction evidence="1">
        <text>L-methionyl-[protein] + [thioredoxin]-disulfide + H2O = L-methionyl-(S)-S-oxide-[protein] + [thioredoxin]-dithiol</text>
        <dbReference type="Rhea" id="RHEA:14217"/>
        <dbReference type="Rhea" id="RHEA-COMP:10698"/>
        <dbReference type="Rhea" id="RHEA-COMP:10700"/>
        <dbReference type="Rhea" id="RHEA-COMP:12313"/>
        <dbReference type="Rhea" id="RHEA-COMP:12315"/>
        <dbReference type="ChEBI" id="CHEBI:15377"/>
        <dbReference type="ChEBI" id="CHEBI:16044"/>
        <dbReference type="ChEBI" id="CHEBI:29950"/>
        <dbReference type="ChEBI" id="CHEBI:44120"/>
        <dbReference type="ChEBI" id="CHEBI:50058"/>
        <dbReference type="EC" id="1.8.4.11"/>
    </reaction>
</comment>
<comment type="catalytic activity">
    <reaction evidence="1">
        <text>[thioredoxin]-disulfide + L-methionine + H2O = L-methionine (S)-S-oxide + [thioredoxin]-dithiol</text>
        <dbReference type="Rhea" id="RHEA:19993"/>
        <dbReference type="Rhea" id="RHEA-COMP:10698"/>
        <dbReference type="Rhea" id="RHEA-COMP:10700"/>
        <dbReference type="ChEBI" id="CHEBI:15377"/>
        <dbReference type="ChEBI" id="CHEBI:29950"/>
        <dbReference type="ChEBI" id="CHEBI:50058"/>
        <dbReference type="ChEBI" id="CHEBI:57844"/>
        <dbReference type="ChEBI" id="CHEBI:58772"/>
        <dbReference type="EC" id="1.8.4.11"/>
    </reaction>
</comment>
<comment type="similarity">
    <text evidence="1">Belongs to the MsrA Met sulfoxide reductase family.</text>
</comment>
<organism>
    <name type="scientific">Ureaplasma urealyticum serovar 10 (strain ATCC 33699 / Western)</name>
    <dbReference type="NCBI Taxonomy" id="565575"/>
    <lineage>
        <taxon>Bacteria</taxon>
        <taxon>Bacillati</taxon>
        <taxon>Mycoplasmatota</taxon>
        <taxon>Mycoplasmoidales</taxon>
        <taxon>Mycoplasmoidaceae</taxon>
        <taxon>Ureaplasma</taxon>
    </lineage>
</organism>
<proteinExistence type="inferred from homology"/>
<protein>
    <recommendedName>
        <fullName evidence="1">Peptide methionine sulfoxide reductase MsrA</fullName>
        <shortName evidence="1">Protein-methionine-S-oxide reductase</shortName>
        <ecNumber evidence="1">1.8.4.11</ecNumber>
    </recommendedName>
    <alternativeName>
        <fullName evidence="1">Peptide-methionine (S)-S-oxide reductase</fullName>
        <shortName evidence="1">Peptide Met(O) reductase</shortName>
    </alternativeName>
</protein>
<name>MSRA_UREU1</name>
<evidence type="ECO:0000255" key="1">
    <source>
        <dbReference type="HAMAP-Rule" id="MF_01401"/>
    </source>
</evidence>
<reference key="1">
    <citation type="submission" date="2008-10" db="EMBL/GenBank/DDBJ databases">
        <title>Genome sequence of Ureaplasma urealyticum serovar 10 ATCC-33699.</title>
        <authorList>
            <person name="Shrivastava S."/>
            <person name="Methe B.A."/>
            <person name="Glass J."/>
            <person name="White K."/>
            <person name="Duffy L.B."/>
        </authorList>
    </citation>
    <scope>NUCLEOTIDE SEQUENCE [LARGE SCALE GENOMIC DNA]</scope>
    <source>
        <strain>ATCC 33699 / Western</strain>
    </source>
</reference>
<sequence length="165" mass="19239">MVKSIWVAGGCFWGIQKYFDSIKGVRHTIVGYSQGNVINPSYEQVCTQTTNHTETVQVDYDDRFVSLTSILEHLYQIIDPFSLNKQGEDIGNQYRSGIYYVDHEDALIIKNFLLQKQNQTSKKIMIEVHKLHNFNIAEEYHQKYLDKNPNGYCHVNLSLSKKRFN</sequence>
<gene>
    <name evidence="1" type="primary">msrA</name>
    <name type="ordered locus">UUR10_0286</name>
</gene>
<dbReference type="EC" id="1.8.4.11" evidence="1"/>
<dbReference type="EMBL" id="CP001184">
    <property type="protein sequence ID" value="ACI59911.1"/>
    <property type="molecule type" value="Genomic_DNA"/>
</dbReference>
<dbReference type="RefSeq" id="WP_004025686.1">
    <property type="nucleotide sequence ID" value="NC_011374.1"/>
</dbReference>
<dbReference type="SMR" id="B5ZB99"/>
<dbReference type="STRING" id="565575.UUR10_0286"/>
<dbReference type="GeneID" id="93848765"/>
<dbReference type="KEGG" id="uue:UUR10_0286"/>
<dbReference type="eggNOG" id="COG0225">
    <property type="taxonomic scope" value="Bacteria"/>
</dbReference>
<dbReference type="HOGENOM" id="CLU_031040_10_2_14"/>
<dbReference type="OrthoDB" id="4174719at2"/>
<dbReference type="Proteomes" id="UP000002018">
    <property type="component" value="Chromosome"/>
</dbReference>
<dbReference type="GO" id="GO:0005737">
    <property type="term" value="C:cytoplasm"/>
    <property type="evidence" value="ECO:0007669"/>
    <property type="project" value="TreeGrafter"/>
</dbReference>
<dbReference type="GO" id="GO:0036456">
    <property type="term" value="F:L-methionine-(S)-S-oxide reductase activity"/>
    <property type="evidence" value="ECO:0007669"/>
    <property type="project" value="TreeGrafter"/>
</dbReference>
<dbReference type="GO" id="GO:0008113">
    <property type="term" value="F:peptide-methionine (S)-S-oxide reductase activity"/>
    <property type="evidence" value="ECO:0007669"/>
    <property type="project" value="UniProtKB-UniRule"/>
</dbReference>
<dbReference type="GO" id="GO:0034599">
    <property type="term" value="P:cellular response to oxidative stress"/>
    <property type="evidence" value="ECO:0007669"/>
    <property type="project" value="TreeGrafter"/>
</dbReference>
<dbReference type="GO" id="GO:0036211">
    <property type="term" value="P:protein modification process"/>
    <property type="evidence" value="ECO:0007669"/>
    <property type="project" value="UniProtKB-UniRule"/>
</dbReference>
<dbReference type="Gene3D" id="3.30.1060.10">
    <property type="entry name" value="Peptide methionine sulphoxide reductase MsrA"/>
    <property type="match status" value="1"/>
</dbReference>
<dbReference type="HAMAP" id="MF_01401">
    <property type="entry name" value="MsrA"/>
    <property type="match status" value="1"/>
</dbReference>
<dbReference type="InterPro" id="IPR002569">
    <property type="entry name" value="Met_Sox_Rdtase_MsrA_dom"/>
</dbReference>
<dbReference type="InterPro" id="IPR036509">
    <property type="entry name" value="Met_Sox_Rdtase_MsrA_sf"/>
</dbReference>
<dbReference type="InterPro" id="IPR050162">
    <property type="entry name" value="MsrA_MetSO_reductase"/>
</dbReference>
<dbReference type="NCBIfam" id="TIGR00401">
    <property type="entry name" value="msrA"/>
    <property type="match status" value="1"/>
</dbReference>
<dbReference type="PANTHER" id="PTHR42799">
    <property type="entry name" value="MITOCHONDRIAL PEPTIDE METHIONINE SULFOXIDE REDUCTASE"/>
    <property type="match status" value="1"/>
</dbReference>
<dbReference type="PANTHER" id="PTHR42799:SF2">
    <property type="entry name" value="MITOCHONDRIAL PEPTIDE METHIONINE SULFOXIDE REDUCTASE"/>
    <property type="match status" value="1"/>
</dbReference>
<dbReference type="Pfam" id="PF01625">
    <property type="entry name" value="PMSR"/>
    <property type="match status" value="1"/>
</dbReference>
<dbReference type="SUPFAM" id="SSF55068">
    <property type="entry name" value="Peptide methionine sulfoxide reductase"/>
    <property type="match status" value="1"/>
</dbReference>
<accession>B5ZB99</accession>